<organism>
    <name type="scientific">Teredinibacter turnerae (strain ATCC 39867 / T7901)</name>
    <dbReference type="NCBI Taxonomy" id="377629"/>
    <lineage>
        <taxon>Bacteria</taxon>
        <taxon>Pseudomonadati</taxon>
        <taxon>Pseudomonadota</taxon>
        <taxon>Gammaproteobacteria</taxon>
        <taxon>Cellvibrionales</taxon>
        <taxon>Cellvibrionaceae</taxon>
        <taxon>Teredinibacter</taxon>
    </lineage>
</organism>
<name>Y3542_TERTT</name>
<dbReference type="EMBL" id="CP001614">
    <property type="protein sequence ID" value="ACR12677.1"/>
    <property type="molecule type" value="Genomic_DNA"/>
</dbReference>
<dbReference type="RefSeq" id="WP_015818789.1">
    <property type="nucleotide sequence ID" value="NC_012997.1"/>
</dbReference>
<dbReference type="SMR" id="C5BRG2"/>
<dbReference type="STRING" id="377629.TERTU_3542"/>
<dbReference type="GeneID" id="58410891"/>
<dbReference type="KEGG" id="ttu:TERTU_3542"/>
<dbReference type="eggNOG" id="COG1666">
    <property type="taxonomic scope" value="Bacteria"/>
</dbReference>
<dbReference type="HOGENOM" id="CLU_099839_1_0_6"/>
<dbReference type="OrthoDB" id="9801447at2"/>
<dbReference type="Proteomes" id="UP000009080">
    <property type="component" value="Chromosome"/>
</dbReference>
<dbReference type="GO" id="GO:0005829">
    <property type="term" value="C:cytosol"/>
    <property type="evidence" value="ECO:0007669"/>
    <property type="project" value="TreeGrafter"/>
</dbReference>
<dbReference type="GO" id="GO:0000166">
    <property type="term" value="F:nucleotide binding"/>
    <property type="evidence" value="ECO:0007669"/>
    <property type="project" value="TreeGrafter"/>
</dbReference>
<dbReference type="CDD" id="cd11740">
    <property type="entry name" value="YajQ_like"/>
    <property type="match status" value="1"/>
</dbReference>
<dbReference type="FunFam" id="3.30.70.860:FF:000001">
    <property type="entry name" value="UPF0234 protein YajQ"/>
    <property type="match status" value="1"/>
</dbReference>
<dbReference type="FunFam" id="3.30.70.990:FF:000001">
    <property type="entry name" value="UPF0234 protein YajQ"/>
    <property type="match status" value="1"/>
</dbReference>
<dbReference type="Gene3D" id="3.30.70.860">
    <property type="match status" value="1"/>
</dbReference>
<dbReference type="Gene3D" id="3.30.70.990">
    <property type="entry name" value="YajQ-like, domain 2"/>
    <property type="match status" value="1"/>
</dbReference>
<dbReference type="HAMAP" id="MF_00632">
    <property type="entry name" value="YajQ"/>
    <property type="match status" value="1"/>
</dbReference>
<dbReference type="InterPro" id="IPR007551">
    <property type="entry name" value="DUF520"/>
</dbReference>
<dbReference type="InterPro" id="IPR035571">
    <property type="entry name" value="UPF0234-like_C"/>
</dbReference>
<dbReference type="InterPro" id="IPR035570">
    <property type="entry name" value="UPF0234_N"/>
</dbReference>
<dbReference type="InterPro" id="IPR036183">
    <property type="entry name" value="YajQ-like_sf"/>
</dbReference>
<dbReference type="NCBIfam" id="NF003819">
    <property type="entry name" value="PRK05412.1"/>
    <property type="match status" value="1"/>
</dbReference>
<dbReference type="PANTHER" id="PTHR30476">
    <property type="entry name" value="UPF0234 PROTEIN YAJQ"/>
    <property type="match status" value="1"/>
</dbReference>
<dbReference type="PANTHER" id="PTHR30476:SF0">
    <property type="entry name" value="UPF0234 PROTEIN YAJQ"/>
    <property type="match status" value="1"/>
</dbReference>
<dbReference type="Pfam" id="PF04461">
    <property type="entry name" value="DUF520"/>
    <property type="match status" value="1"/>
</dbReference>
<dbReference type="SUPFAM" id="SSF89963">
    <property type="entry name" value="YajQ-like"/>
    <property type="match status" value="2"/>
</dbReference>
<comment type="function">
    <text evidence="1">Nucleotide-binding protein.</text>
</comment>
<comment type="similarity">
    <text evidence="1">Belongs to the YajQ family.</text>
</comment>
<feature type="chain" id="PRO_1000212341" description="Nucleotide-binding protein TERTU_3542">
    <location>
        <begin position="1"/>
        <end position="160"/>
    </location>
</feature>
<gene>
    <name type="ordered locus">TERTU_3542</name>
</gene>
<evidence type="ECO:0000255" key="1">
    <source>
        <dbReference type="HAMAP-Rule" id="MF_00632"/>
    </source>
</evidence>
<reference key="1">
    <citation type="journal article" date="2009" name="PLoS ONE">
        <title>The complete genome of Teredinibacter turnerae T7901: an intracellular endosymbiont of marine wood-boring bivalves (shipworms).</title>
        <authorList>
            <person name="Yang J.C."/>
            <person name="Madupu R."/>
            <person name="Durkin A.S."/>
            <person name="Ekborg N.A."/>
            <person name="Pedamallu C.S."/>
            <person name="Hostetler J.B."/>
            <person name="Radune D."/>
            <person name="Toms B.S."/>
            <person name="Henrissat B."/>
            <person name="Coutinho P.M."/>
            <person name="Schwarz S."/>
            <person name="Field L."/>
            <person name="Trindade-Silva A.E."/>
            <person name="Soares C.A.G."/>
            <person name="Elshahawi S."/>
            <person name="Hanora A."/>
            <person name="Schmidt E.W."/>
            <person name="Haygood M.G."/>
            <person name="Posfai J."/>
            <person name="Benner J."/>
            <person name="Madinger C."/>
            <person name="Nove J."/>
            <person name="Anton B."/>
            <person name="Chaudhary K."/>
            <person name="Foster J."/>
            <person name="Holman A."/>
            <person name="Kumar S."/>
            <person name="Lessard P.A."/>
            <person name="Luyten Y.A."/>
            <person name="Slatko B."/>
            <person name="Wood N."/>
            <person name="Wu B."/>
            <person name="Teplitski M."/>
            <person name="Mougous J.D."/>
            <person name="Ward N."/>
            <person name="Eisen J.A."/>
            <person name="Badger J.H."/>
            <person name="Distel D.L."/>
        </authorList>
    </citation>
    <scope>NUCLEOTIDE SEQUENCE [LARGE SCALE GENOMIC DNA]</scope>
    <source>
        <strain>ATCC 39867 / T7901</strain>
    </source>
</reference>
<sequence length="160" mass="18233">MPSFDIVSEIDNQEVRNAVENAQRELETRFDFRGVEASFEWTSKETTLSAEADFQLQQMLDILRNKLIKRNVDPDTMEVGDPEHSGKTFSQKITFLEGIDAPTAKKLVKLIKDSKLKVQASIQGDQVRVTGKKRDDLQAVMALVREGKLGQPFQFNNFRD</sequence>
<proteinExistence type="inferred from homology"/>
<keyword id="KW-0547">Nucleotide-binding</keyword>
<keyword id="KW-1185">Reference proteome</keyword>
<protein>
    <recommendedName>
        <fullName evidence="1">Nucleotide-binding protein TERTU_3542</fullName>
    </recommendedName>
</protein>
<accession>C5BRG2</accession>